<sequence length="88" mass="9735">MLPRSCKDFYETLRTAVLCGQACAKDMGAIVFHGLWQGLAVLIAQPPPPTHRRLESRPTASVAVHDRQLVHMLANMVLAAETRGNHVY</sequence>
<comment type="similarity">
    <text evidence="2">To Rhizobium NGR234A y4oL.</text>
</comment>
<name>Y4BB_SINFN</name>
<dbReference type="EMBL" id="U00090">
    <property type="protein sequence ID" value="AAB91618.1"/>
    <property type="molecule type" value="Genomic_DNA"/>
</dbReference>
<dbReference type="EMBL" id="U00090">
    <property type="protein sequence ID" value="AAB91819.1"/>
    <property type="molecule type" value="Genomic_DNA"/>
</dbReference>
<dbReference type="RefSeq" id="NP_443780.1">
    <property type="nucleotide sequence ID" value="NC_000914.2"/>
</dbReference>
<dbReference type="RefSeq" id="NP_444022.1">
    <property type="nucleotide sequence ID" value="NC_000914.2"/>
</dbReference>
<dbReference type="RefSeq" id="WP_010875069.1">
    <property type="nucleotide sequence ID" value="NC_000914.2"/>
</dbReference>
<dbReference type="KEGG" id="rhi:NGR_a00270"/>
<dbReference type="KEGG" id="rhi:NGR_a02030"/>
<dbReference type="HOGENOM" id="CLU_166166_0_0_5"/>
<dbReference type="OrthoDB" id="8284461at2"/>
<dbReference type="Proteomes" id="UP000001054">
    <property type="component" value="Plasmid pNGR234a"/>
</dbReference>
<protein>
    <recommendedName>
        <fullName>Uncharacterized protein y4bB/y4pI</fullName>
    </recommendedName>
</protein>
<organism>
    <name type="scientific">Sinorhizobium fredii (strain NBRC 101917 / NGR234)</name>
    <dbReference type="NCBI Taxonomy" id="394"/>
    <lineage>
        <taxon>Bacteria</taxon>
        <taxon>Pseudomonadati</taxon>
        <taxon>Pseudomonadota</taxon>
        <taxon>Alphaproteobacteria</taxon>
        <taxon>Hyphomicrobiales</taxon>
        <taxon>Rhizobiaceae</taxon>
        <taxon>Sinorhizobium/Ensifer group</taxon>
        <taxon>Sinorhizobium</taxon>
    </lineage>
</organism>
<accession>P55369</accession>
<keyword id="KW-0614">Plasmid</keyword>
<keyword id="KW-1185">Reference proteome</keyword>
<keyword id="KW-0732">Signal</keyword>
<geneLocation type="plasmid">
    <name>sym pNGR234a</name>
</geneLocation>
<feature type="signal peptide" evidence="1">
    <location>
        <begin position="1"/>
        <end position="24"/>
    </location>
</feature>
<feature type="chain" id="PRO_0000014158" description="Uncharacterized protein y4bB/y4pI">
    <location>
        <begin position="25"/>
        <end position="88"/>
    </location>
</feature>
<evidence type="ECO:0000255" key="1"/>
<evidence type="ECO:0000305" key="2"/>
<gene>
    <name type="ordered locus">NGR_a00270</name>
    <name type="ORF">y4bB</name>
</gene>
<gene>
    <name type="ordered locus">NGR_a02030</name>
    <name type="ORF">y4pI</name>
</gene>
<reference key="1">
    <citation type="journal article" date="1997" name="Nature">
        <title>Molecular basis of symbiosis between Rhizobium and legumes.</title>
        <authorList>
            <person name="Freiberg C.A."/>
            <person name="Fellay R."/>
            <person name="Bairoch A."/>
            <person name="Broughton W.J."/>
            <person name="Rosenthal A."/>
            <person name="Perret X."/>
        </authorList>
    </citation>
    <scope>NUCLEOTIDE SEQUENCE [LARGE SCALE GENOMIC DNA]</scope>
    <source>
        <strain>NBRC 101917 / NGR234</strain>
    </source>
</reference>
<reference key="2">
    <citation type="journal article" date="2009" name="Appl. Environ. Microbiol.">
        <title>Rhizobium sp. strain NGR234 possesses a remarkable number of secretion systems.</title>
        <authorList>
            <person name="Schmeisser C."/>
            <person name="Liesegang H."/>
            <person name="Krysciak D."/>
            <person name="Bakkou N."/>
            <person name="Le Quere A."/>
            <person name="Wollherr A."/>
            <person name="Heinemeyer I."/>
            <person name="Morgenstern B."/>
            <person name="Pommerening-Roeser A."/>
            <person name="Flores M."/>
            <person name="Palacios R."/>
            <person name="Brenner S."/>
            <person name="Gottschalk G."/>
            <person name="Schmitz R.A."/>
            <person name="Broughton W.J."/>
            <person name="Perret X."/>
            <person name="Strittmatter A.W."/>
            <person name="Streit W.R."/>
        </authorList>
    </citation>
    <scope>NUCLEOTIDE SEQUENCE [LARGE SCALE GENOMIC DNA]</scope>
    <source>
        <strain>NBRC 101917 / NGR234</strain>
    </source>
</reference>
<proteinExistence type="inferred from homology"/>